<proteinExistence type="inferred from homology"/>
<organism>
    <name type="scientific">Rhizobium leguminosarum bv. viciae</name>
    <dbReference type="NCBI Taxonomy" id="387"/>
    <lineage>
        <taxon>Bacteria</taxon>
        <taxon>Pseudomonadati</taxon>
        <taxon>Pseudomonadota</taxon>
        <taxon>Alphaproteobacteria</taxon>
        <taxon>Hyphomicrobiales</taxon>
        <taxon>Rhizobiaceae</taxon>
        <taxon>Rhizobium/Agrobacterium group</taxon>
        <taxon>Rhizobium</taxon>
    </lineage>
</organism>
<comment type="function">
    <text evidence="1">Catalyzes the attachment of alanine to tRNA(Ala) in a two-step reaction: alanine is first activated by ATP to form Ala-AMP and then transferred to the acceptor end of tRNA(Ala). Also edits incorrectly charged Ser-tRNA(Ala) and Gly-tRNA(Ala) via its editing domain (By similarity).</text>
</comment>
<comment type="catalytic activity">
    <reaction>
        <text>tRNA(Ala) + L-alanine + ATP = L-alanyl-tRNA(Ala) + AMP + diphosphate</text>
        <dbReference type="Rhea" id="RHEA:12540"/>
        <dbReference type="Rhea" id="RHEA-COMP:9657"/>
        <dbReference type="Rhea" id="RHEA-COMP:9923"/>
        <dbReference type="ChEBI" id="CHEBI:30616"/>
        <dbReference type="ChEBI" id="CHEBI:33019"/>
        <dbReference type="ChEBI" id="CHEBI:57972"/>
        <dbReference type="ChEBI" id="CHEBI:78442"/>
        <dbReference type="ChEBI" id="CHEBI:78497"/>
        <dbReference type="ChEBI" id="CHEBI:456215"/>
        <dbReference type="EC" id="6.1.1.7"/>
    </reaction>
</comment>
<comment type="cofactor">
    <cofactor evidence="1">
        <name>Zn(2+)</name>
        <dbReference type="ChEBI" id="CHEBI:29105"/>
    </cofactor>
    <text evidence="1">Binds 1 zinc ion per subunit.</text>
</comment>
<comment type="subcellular location">
    <subcellularLocation>
        <location evidence="1">Cytoplasm</location>
    </subcellularLocation>
</comment>
<comment type="domain">
    <text evidence="1">Consists of three domains; the N-terminal catalytic domain, the editing domain and the C-terminal C-Ala domain. The editing domain removes incorrectly charged amino acids, while the C-Ala domain, along with tRNA(Ala), serves as a bridge to cooperatively bring together the editing and aminoacylation centers thus stimulating deacylation of misacylated tRNAs (By similarity).</text>
</comment>
<comment type="similarity">
    <text evidence="2">Belongs to the class-II aminoacyl-tRNA synthetase family.</text>
</comment>
<keyword id="KW-0030">Aminoacyl-tRNA synthetase</keyword>
<keyword id="KW-0067">ATP-binding</keyword>
<keyword id="KW-0963">Cytoplasm</keyword>
<keyword id="KW-0436">Ligase</keyword>
<keyword id="KW-0547">Nucleotide-binding</keyword>
<keyword id="KW-0648">Protein biosynthesis</keyword>
<keyword id="KW-0694">RNA-binding</keyword>
<keyword id="KW-0820">tRNA-binding</keyword>
<accession>P24075</accession>
<dbReference type="EC" id="6.1.1.7"/>
<dbReference type="EMBL" id="X59956">
    <property type="protein sequence ID" value="CAA42579.1"/>
    <property type="molecule type" value="Genomic_DNA"/>
</dbReference>
<dbReference type="PIR" id="S16897">
    <property type="entry name" value="S16897"/>
</dbReference>
<dbReference type="SMR" id="P24075"/>
<dbReference type="GO" id="GO:0005829">
    <property type="term" value="C:cytosol"/>
    <property type="evidence" value="ECO:0007669"/>
    <property type="project" value="TreeGrafter"/>
</dbReference>
<dbReference type="GO" id="GO:0004813">
    <property type="term" value="F:alanine-tRNA ligase activity"/>
    <property type="evidence" value="ECO:0007669"/>
    <property type="project" value="UniProtKB-EC"/>
</dbReference>
<dbReference type="GO" id="GO:0002161">
    <property type="term" value="F:aminoacyl-tRNA deacylase activity"/>
    <property type="evidence" value="ECO:0007669"/>
    <property type="project" value="TreeGrafter"/>
</dbReference>
<dbReference type="GO" id="GO:0005524">
    <property type="term" value="F:ATP binding"/>
    <property type="evidence" value="ECO:0007669"/>
    <property type="project" value="UniProtKB-KW"/>
</dbReference>
<dbReference type="GO" id="GO:0000049">
    <property type="term" value="F:tRNA binding"/>
    <property type="evidence" value="ECO:0007669"/>
    <property type="project" value="UniProtKB-KW"/>
</dbReference>
<dbReference type="GO" id="GO:0006419">
    <property type="term" value="P:alanyl-tRNA aminoacylation"/>
    <property type="evidence" value="ECO:0007669"/>
    <property type="project" value="InterPro"/>
</dbReference>
<dbReference type="GO" id="GO:0045892">
    <property type="term" value="P:negative regulation of DNA-templated transcription"/>
    <property type="evidence" value="ECO:0007669"/>
    <property type="project" value="TreeGrafter"/>
</dbReference>
<dbReference type="CDD" id="cd00673">
    <property type="entry name" value="AlaRS_core"/>
    <property type="match status" value="1"/>
</dbReference>
<dbReference type="FunFam" id="3.30.930.10:FF:000004">
    <property type="entry name" value="Alanine--tRNA ligase"/>
    <property type="match status" value="1"/>
</dbReference>
<dbReference type="Gene3D" id="3.30.930.10">
    <property type="entry name" value="Bira Bifunctional Protein, Domain 2"/>
    <property type="match status" value="1"/>
</dbReference>
<dbReference type="InterPro" id="IPR045864">
    <property type="entry name" value="aa-tRNA-synth_II/BPL/LPL"/>
</dbReference>
<dbReference type="InterPro" id="IPR018165">
    <property type="entry name" value="Ala-tRNA-synth_IIc_core"/>
</dbReference>
<dbReference type="InterPro" id="IPR018164">
    <property type="entry name" value="Ala-tRNA-synth_IIc_N"/>
</dbReference>
<dbReference type="InterPro" id="IPR050058">
    <property type="entry name" value="Ala-tRNA_ligase"/>
</dbReference>
<dbReference type="PANTHER" id="PTHR11777:SF9">
    <property type="entry name" value="ALANINE--TRNA LIGASE, CYTOPLASMIC"/>
    <property type="match status" value="1"/>
</dbReference>
<dbReference type="PANTHER" id="PTHR11777">
    <property type="entry name" value="ALANYL-TRNA SYNTHETASE"/>
    <property type="match status" value="1"/>
</dbReference>
<dbReference type="Pfam" id="PF01411">
    <property type="entry name" value="tRNA-synt_2c"/>
    <property type="match status" value="1"/>
</dbReference>
<dbReference type="SUPFAM" id="SSF55681">
    <property type="entry name" value="Class II aaRS and biotin synthetases"/>
    <property type="match status" value="1"/>
</dbReference>
<dbReference type="PROSITE" id="PS50860">
    <property type="entry name" value="AA_TRNA_LIGASE_II_ALA"/>
    <property type="match status" value="1"/>
</dbReference>
<feature type="chain" id="PRO_0000075185" description="Alanine--tRNA ligase">
    <location>
        <begin position="1"/>
        <end position="201" status="greater than"/>
    </location>
</feature>
<feature type="non-terminal residue">
    <location>
        <position position="201"/>
    </location>
</feature>
<name>SYA_RHILV</name>
<gene>
    <name type="primary">alaS</name>
</gene>
<reference key="1">
    <citation type="journal article" date="1991" name="Mol. Gen. Genet.">
        <title>Characterization of recA genes and recA mutants of Rhizobium meliloti and Rhizobium leguminosarum biovar viciae.</title>
        <authorList>
            <person name="Selbitschka W."/>
            <person name="Arnold W."/>
            <person name="Priefer U.B."/>
            <person name="Rottschafer T."/>
            <person name="Schmidt M."/>
            <person name="Simon R."/>
            <person name="Puehler A."/>
        </authorList>
    </citation>
    <scope>NUCLEOTIDE SEQUENCE [GENOMIC DNA]</scope>
    <source>
        <strain>VF39</strain>
    </source>
</reference>
<protein>
    <recommendedName>
        <fullName>Alanine--tRNA ligase</fullName>
        <ecNumber>6.1.1.7</ecNumber>
    </recommendedName>
    <alternativeName>
        <fullName>Alanyl-tRNA synthetase</fullName>
        <shortName>AlaRS</shortName>
    </alternativeName>
</protein>
<evidence type="ECO:0000250" key="1"/>
<evidence type="ECO:0000305" key="2"/>
<sequence>MSGVNDIRSTFLDYFKKNGHEIVPSSPLVPRNDPTLMFTNAGMVQFKNVFTGLEKRSYSTATTSQKCVRVGGKHNDLDNVGYTARHLTFFEMLGNFSFGDYFKENAIELAWKLVTEGFDLPKHRLLVTVYSEDEEAATLWKKIAGFSDDKIIRISTSDNFWQMGDTGPCGPCSEIFIDQGENVWGGPPGSPEEDGDRFLEF</sequence>